<proteinExistence type="evidence at protein level"/>
<feature type="chain" id="PRO_0000090999" description="Elongation factor 2">
    <location>
        <begin position="1"/>
        <end position="858"/>
    </location>
</feature>
<feature type="domain" description="tr-type G" evidence="6">
    <location>
        <begin position="17"/>
        <end position="362"/>
    </location>
</feature>
<feature type="binding site" evidence="3">
    <location>
        <begin position="26"/>
        <end position="33"/>
    </location>
    <ligand>
        <name>GTP</name>
        <dbReference type="ChEBI" id="CHEBI:37565"/>
    </ligand>
</feature>
<feature type="binding site" evidence="3">
    <location>
        <begin position="158"/>
        <end position="161"/>
    </location>
    <ligand>
        <name>GTP</name>
        <dbReference type="ChEBI" id="CHEBI:37565"/>
    </ligand>
</feature>
<feature type="binding site" evidence="3">
    <location>
        <begin position="216"/>
        <end position="218"/>
    </location>
    <ligand>
        <name>GTP</name>
        <dbReference type="ChEBI" id="CHEBI:37565"/>
    </ligand>
</feature>
<feature type="site" description="Cleavage" evidence="2">
    <location>
        <begin position="586"/>
        <end position="587"/>
    </location>
</feature>
<feature type="site" description="Cleavage" evidence="2">
    <location>
        <begin position="605"/>
        <end position="606"/>
    </location>
</feature>
<feature type="modified residue" description="Phosphothreonine" evidence="2">
    <location>
        <position position="54"/>
    </location>
</feature>
<feature type="modified residue" description="Phosphothreonine; by EEF2K" evidence="2">
    <location>
        <position position="57"/>
    </location>
</feature>
<feature type="modified residue" description="Phosphothreonine" evidence="2">
    <location>
        <position position="59"/>
    </location>
</feature>
<feature type="modified residue" description="N6-succinyllysine" evidence="4">
    <location>
        <position position="152"/>
    </location>
</feature>
<feature type="modified residue" description="N6-acetyllysine" evidence="2">
    <location>
        <position position="235"/>
    </location>
</feature>
<feature type="modified residue" description="N6-acetyllysine; alternate" evidence="2">
    <location>
        <position position="239"/>
    </location>
</feature>
<feature type="modified residue" description="Phosphotyrosine; by CSK" evidence="2">
    <location>
        <position position="265"/>
    </location>
</feature>
<feature type="modified residue" description="N6-acetyllysine; alternate" evidence="2">
    <location>
        <position position="272"/>
    </location>
</feature>
<feature type="modified residue" description="N6-succinyllysine; alternate" evidence="4">
    <location>
        <position position="272"/>
    </location>
</feature>
<feature type="modified residue" description="N6-acetyllysine" evidence="2">
    <location>
        <position position="275"/>
    </location>
</feature>
<feature type="modified residue" description="Phosphoserine" evidence="1">
    <location>
        <position position="325"/>
    </location>
</feature>
<feature type="modified residue" description="Phosphotyrosine; by CSK" evidence="2">
    <location>
        <position position="373"/>
    </location>
</feature>
<feature type="modified residue" description="Phosphothreonine" evidence="2">
    <location>
        <position position="435"/>
    </location>
</feature>
<feature type="modified residue" description="N6-acetyllysine" evidence="4">
    <location>
        <position position="439"/>
    </location>
</feature>
<feature type="modified residue" description="N6-acetyllysine" evidence="2">
    <location>
        <position position="445"/>
    </location>
</feature>
<feature type="modified residue" description="Phosphoserine" evidence="2">
    <location>
        <position position="502"/>
    </location>
</feature>
<feature type="modified residue" description="N6,N6,N6-trimethyllysine; by EEF2KMT" evidence="2">
    <location>
        <position position="525"/>
    </location>
</feature>
<feature type="modified residue" description="N6-succinyllysine" evidence="4">
    <location>
        <position position="572"/>
    </location>
</feature>
<feature type="modified residue" description="Phosphoserine; by CDK2" evidence="2">
    <location>
        <position position="595"/>
    </location>
</feature>
<feature type="modified residue" description="N6-acetyllysine" evidence="4">
    <location>
        <position position="619"/>
    </location>
</feature>
<feature type="modified residue" description="(Microbial infection) ADP-ribosyldiphthamide" evidence="7">
    <location>
        <position position="715"/>
    </location>
</feature>
<feature type="modified residue" description="Diphthamide" evidence="7">
    <location>
        <position position="715"/>
    </location>
</feature>
<feature type="cross-link" description="Glycyl lysine isopeptide (Lys-Gly) (interchain with G-Cter in SUMO1); alternate" evidence="2">
    <location>
        <position position="239"/>
    </location>
</feature>
<feature type="cross-link" description="Glycyl lysine isopeptide (Lys-Gly) (interchain with G-Cter in SUMO)" evidence="2">
    <location>
        <position position="322"/>
    </location>
</feature>
<feature type="cross-link" description="Glycyl lysine isopeptide (Lys-Gly) (interchain with G-Cter in SUMO)" evidence="2">
    <location>
        <position position="529"/>
    </location>
</feature>
<feature type="mutagenesis site" description="Prevents H-715 diphthamide modification and its subsequent ADP-ribosylation by diphtheria toxin. Prevents inhibition of protein synthesis by diphtheria toxin." evidence="7">
    <original>S</original>
    <variation>G</variation>
    <location>
        <position position="584"/>
    </location>
</feature>
<feature type="mutagenesis site" description="Prevents H-715 diphthamide modification and its subsequent ADP-ribosylation by diphtheria toxin. Prevents inhibition of protein synthesis by diphtheria toxin." evidence="7">
    <original>I</original>
    <variation>N</variation>
    <location>
        <position position="714"/>
    </location>
</feature>
<feature type="mutagenesis site" description="Prevents H-715 diphthamide modification and its subsequent ADP-ribosylation by diphtheria toxin. Prevents inhibition of protein synthesis by diphtheria toxin." evidence="7">
    <original>G</original>
    <variation>R</variation>
    <location>
        <position position="717"/>
    </location>
</feature>
<feature type="mutagenesis site" description="Prevents H-715 diphthamide modification and its subsequent ADP-ribosylation by diphtheria toxin. Prevents inhibition of protein synthesis by diphtheria toxin." evidence="7">
    <original>G</original>
    <variation>D</variation>
    <location>
        <position position="719"/>
    </location>
</feature>
<feature type="sequence conflict" description="In Ref. 1; AAA50387 and 3; AAB60497." evidence="8" ref="1 3">
    <original>E</original>
    <variation>K</variation>
    <location>
        <position position="16"/>
    </location>
</feature>
<feature type="sequence conflict" description="In Ref. 1; AAA50387 and 3; AAB60497." evidence="8" ref="1 3">
    <original>P</original>
    <variation>A</variation>
    <location>
        <position position="303"/>
    </location>
</feature>
<feature type="sequence conflict" description="In Ref. 1; AAA50387." evidence="8" ref="1">
    <original>D</original>
    <variation>E</variation>
    <location>
        <position position="441"/>
    </location>
</feature>
<feature type="sequence conflict" description="In Ref. 2; AAA50386." evidence="8" ref="2">
    <original>G</original>
    <variation>R</variation>
    <location>
        <position position="717"/>
    </location>
</feature>
<feature type="sequence conflict" description="In Ref. 1; AAA50387 and 3; AAB60497." evidence="8" ref="1 3">
    <original>G</original>
    <variation>P</variation>
    <location>
        <position position="831"/>
    </location>
</feature>
<reference key="1">
    <citation type="journal article" date="1986" name="Proc. Natl. Acad. Sci. U.S.A.">
        <title>Amino acid sequence of mammalian elongation factor 2 deduced from the cDNA sequence: homology with GTP-binding proteins.</title>
        <authorList>
            <person name="Kohno K."/>
            <person name="Uchida T."/>
            <person name="Ohkubo H."/>
            <person name="Nakanishi S."/>
            <person name="Nakanishi T."/>
            <person name="Fukui T."/>
            <person name="Ohtsuka E."/>
            <person name="Ikehara M."/>
            <person name="Okada Y."/>
        </authorList>
    </citation>
    <scope>NUCLEOTIDE SEQUENCE [MRNA]</scope>
</reference>
<reference key="2">
    <citation type="journal article" date="1988" name="J. Biol. Chem.">
        <title>Complete nucleotide sequence and characterization of the 5'-flanking region of mammalian elongation factor 2 gene.</title>
        <authorList>
            <person name="Nakanishi T."/>
            <person name="Kohno K."/>
            <person name="Ishiura M."/>
            <person name="Ohashi H."/>
            <person name="Uchida T."/>
        </authorList>
    </citation>
    <scope>NUCLEOTIDE SEQUENCE [GENOMIC DNA]</scope>
</reference>
<reference key="3">
    <citation type="journal article" date="1995" name="J. Biol. Chem.">
        <title>Mutations in the elongation factor 2 gene which confer resistance to diphtheria toxin and Pseudomonas exotoxin A. Genetic and biochemical analyses.</title>
        <authorList>
            <person name="Foley B.T."/>
            <person name="Moehring J.M."/>
            <person name="Moehring T.J."/>
        </authorList>
    </citation>
    <scope>NUCLEOTIDE SEQUENCE [MRNA]</scope>
    <scope>FUNCTION</scope>
    <scope>DIPHTHAMIDE AT HIS-715</scope>
    <scope>RESISTANCE TO DIPHTHERIA TOXIN</scope>
    <scope>MUTAGENESIS OF SER-584; ILE-714; GLY-717 AND GLY-719</scope>
    <source>
        <tissue>Ovary</tissue>
    </source>
</reference>
<protein>
    <recommendedName>
        <fullName>Elongation factor 2</fullName>
        <shortName>EF-2</shortName>
        <ecNumber evidence="2">3.6.5.-</ecNumber>
    </recommendedName>
</protein>
<organism>
    <name type="scientific">Cricetulus griseus</name>
    <name type="common">Chinese hamster</name>
    <name type="synonym">Cricetulus barabensis griseus</name>
    <dbReference type="NCBI Taxonomy" id="10029"/>
    <lineage>
        <taxon>Eukaryota</taxon>
        <taxon>Metazoa</taxon>
        <taxon>Chordata</taxon>
        <taxon>Craniata</taxon>
        <taxon>Vertebrata</taxon>
        <taxon>Euteleostomi</taxon>
        <taxon>Mammalia</taxon>
        <taxon>Eutheria</taxon>
        <taxon>Euarchontoglires</taxon>
        <taxon>Glires</taxon>
        <taxon>Rodentia</taxon>
        <taxon>Myomorpha</taxon>
        <taxon>Muroidea</taxon>
        <taxon>Cricetidae</taxon>
        <taxon>Cricetinae</taxon>
        <taxon>Cricetulus</taxon>
    </lineage>
</organism>
<accession>P09445</accession>
<accession>P05086</accession>
<accession>Q60423</accession>
<sequence>MVNFTVDQIRAIMDKEANIRNMSVIAHVDHGKSTLTDSLVCKAGIIASARAGETRFTDTRKDEQERCITIKSTAISLFYELSENDLNFIKQSKDGSGFLINLIDSPGHVDFSSEVTAALRVTDGALVVVDCVSGVCVQTETVLRQAIAERIKPVLMMNKMDRALLELQLEPEELYQTFQRIVENVNVIISTYGEGESGPMGNIMIDPVLGTVGFGSGLHGWAFTLKQFAEMYVAKFAAKGEGQLGPAERAKKVEDMMKKLWGDRYFDPANGKFSKSANSPDGKKLPRTFCQLILDPIFKVFDPIMNFRKEETAKLIEKLDIKLDSEDKDKEGKPLLKAVMRRWLPAGDALLQMITIHLPSPVTAQKYRCELLYEGPPDDEAAMGIKSCDPKGPLMMYISKMVPTSDKGRFYAFGRVFSGVVSTGLKVRIMGPNYTPGKKEDLYLKPIQRTILMMGRYVEPIEDVPCGNIVGLVGVDQFLVKTGTITTFEHAHNMRVMKFSVSPVVRVAVEAKNPADLPKLVEGLKRLAKSDPMVQCIIEESGEHIIAGAGELHLEICLKDLEEDHACIPIKKSDPVVSYRETVSEESNVLCLSKSPNKHNRLYMKARPFPDGLAEDIDKGEVSARQELKARARYLAEKYEWDVAEARKIWCFGPDGTGPNILTDITKGVQYLNEIKDSVVAGFQWATKEGALCEENMRGVRFDVHDVTLHADAIHRGGGQIIPTARRCLYASVLTAQPRLMEPIYLVEIQCPEQVVGGIYGVLNRKRGHVFEESQVAGTPMFVVKAYLPVNESFGFTADLRSNTGGQAFPQCVFDHWQILPGDPFDNSSRGSQVVAETRKRKGLKEGIPALDNFLDKL</sequence>
<comment type="function">
    <text evidence="7">Catalyzes the GTP-dependent ribosomal translocation step during translation elongation (PubMed:7559470). During this step, the ribosome changes from the pre-translocational (PRE) to the post-translocational (POST) state as the newly formed A-site-bound peptidyl-tRNA and P-site-bound deacylated tRNA move to the P and E sites, respectively (PubMed:7559470). Catalyzes the coordinated movement of the two tRNA molecules, the mRNA and conformational changes in the ribosome (PubMed:7559470).</text>
</comment>
<comment type="catalytic activity">
    <reaction evidence="2">
        <text>GTP + H2O = GDP + phosphate + H(+)</text>
        <dbReference type="Rhea" id="RHEA:19669"/>
        <dbReference type="ChEBI" id="CHEBI:15377"/>
        <dbReference type="ChEBI" id="CHEBI:15378"/>
        <dbReference type="ChEBI" id="CHEBI:37565"/>
        <dbReference type="ChEBI" id="CHEBI:43474"/>
        <dbReference type="ChEBI" id="CHEBI:58189"/>
    </reaction>
    <physiologicalReaction direction="left-to-right" evidence="2">
        <dbReference type="Rhea" id="RHEA:19670"/>
    </physiologicalReaction>
</comment>
<comment type="subunit">
    <text evidence="2 5">Binds to 80S ribosomes. Actively translating ribosomes show mutually exclusive binding of eIF5a (EIF5A or EIF5A2) and EEF2/eEF2. Interacts with SERBP1; interaction sequesters EEF2/eEF2 at the A-site of the ribosome, thereby blocking the interaction sites of the mRNA-tRNA complex, promoting ribosome stabilization and hibernation (By similarity). Interacts with HABP4; interaction takes place at the A-site of hibernating ribosomes and promotes ribosome stabilization (By similarity). Component of the mRNA surveillance SURF complex, at least composed of ERF1, ERF3 (ERF3A or ERF3B), EEF2, UPF1/RENT1, SMG1, SMG8 and SMG9. Interacts with RBPMS2 (By similarity).</text>
</comment>
<comment type="subcellular location">
    <subcellularLocation>
        <location evidence="2">Cytoplasm</location>
    </subcellularLocation>
    <subcellularLocation>
        <location evidence="2">Nucleus</location>
    </subcellularLocation>
    <text evidence="2">Phosphorylation by CSK promotes cleavage and SUMOylation-dependent nuclear translocation of the C-terminal cleavage product.</text>
</comment>
<comment type="PTM">
    <text evidence="2">Phosphorylation by EF-2 kinase completely inactivates EF-2; it requires prior phosphorylation by CDK2 at Ser-595 during mitotic prometaphase. Phosphorylation by CSK promotes SUMOylation, proteolytic cleavage, and nuclear translocation if the C-terminal fragment.</text>
</comment>
<comment type="PTM">
    <text evidence="7">Diphthamide is 2-[3-carboxyamido-3-(trimethyl-ammonio)propyl]histidine.</text>
</comment>
<comment type="PTM">
    <text evidence="7">(Microbial infection) Diphthamide can be ADP-ribosylated by diphtheria toxin and by Pseudomonas exotoxin A, thus arresting protein synthesis.</text>
</comment>
<comment type="PTM">
    <text evidence="2">ISGylated.</text>
</comment>
<comment type="PTM">
    <text evidence="2">Proteolytically processed at two sites following phosphorylation by CSK.</text>
</comment>
<comment type="PTM">
    <text evidence="2">SUMOylated following phosphorylation by CSK, promotes proteolytic cleavage.</text>
</comment>
<comment type="similarity">
    <text evidence="6">Belongs to the TRAFAC class translation factor GTPase superfamily. Classic translation factor GTPase family. EF-G/EF-2 subfamily.</text>
</comment>
<dbReference type="EC" id="3.6.5.-" evidence="2"/>
<dbReference type="EMBL" id="M13708">
    <property type="protein sequence ID" value="AAA50387.1"/>
    <property type="molecule type" value="mRNA"/>
</dbReference>
<dbReference type="EMBL" id="J03200">
    <property type="protein sequence ID" value="AAA50386.1"/>
    <property type="molecule type" value="Genomic_DNA"/>
</dbReference>
<dbReference type="EMBL" id="U17362">
    <property type="protein sequence ID" value="AAB60497.1"/>
    <property type="molecule type" value="mRNA"/>
</dbReference>
<dbReference type="PIR" id="A25440">
    <property type="entry name" value="A25440"/>
</dbReference>
<dbReference type="RefSeq" id="NP_001230968.1">
    <property type="nucleotide sequence ID" value="NM_001244039.1"/>
</dbReference>
<dbReference type="SMR" id="P09445"/>
<dbReference type="PaxDb" id="10029-NP_001230968.1"/>
<dbReference type="GeneID" id="100689051"/>
<dbReference type="KEGG" id="cge:100689051"/>
<dbReference type="CTD" id="1938"/>
<dbReference type="eggNOG" id="KOG0469">
    <property type="taxonomic scope" value="Eukaryota"/>
</dbReference>
<dbReference type="OrthoDB" id="364892at2759"/>
<dbReference type="Proteomes" id="UP000694386">
    <property type="component" value="Unplaced"/>
</dbReference>
<dbReference type="Proteomes" id="UP001108280">
    <property type="component" value="Chromosome 5"/>
</dbReference>
<dbReference type="GO" id="GO:0005737">
    <property type="term" value="C:cytoplasm"/>
    <property type="evidence" value="ECO:0000250"/>
    <property type="project" value="UniProtKB"/>
</dbReference>
<dbReference type="GO" id="GO:0005829">
    <property type="term" value="C:cytosol"/>
    <property type="evidence" value="ECO:0007669"/>
    <property type="project" value="TreeGrafter"/>
</dbReference>
<dbReference type="GO" id="GO:0005634">
    <property type="term" value="C:nucleus"/>
    <property type="evidence" value="ECO:0007669"/>
    <property type="project" value="UniProtKB-SubCell"/>
</dbReference>
<dbReference type="GO" id="GO:1990904">
    <property type="term" value="C:ribonucleoprotein complex"/>
    <property type="evidence" value="ECO:0007669"/>
    <property type="project" value="TreeGrafter"/>
</dbReference>
<dbReference type="GO" id="GO:0005525">
    <property type="term" value="F:GTP binding"/>
    <property type="evidence" value="ECO:0007669"/>
    <property type="project" value="UniProtKB-KW"/>
</dbReference>
<dbReference type="GO" id="GO:0003924">
    <property type="term" value="F:GTPase activity"/>
    <property type="evidence" value="ECO:0000250"/>
    <property type="project" value="UniProtKB"/>
</dbReference>
<dbReference type="GO" id="GO:0043022">
    <property type="term" value="F:ribosome binding"/>
    <property type="evidence" value="ECO:0007669"/>
    <property type="project" value="TreeGrafter"/>
</dbReference>
<dbReference type="GO" id="GO:0003746">
    <property type="term" value="F:translation elongation factor activity"/>
    <property type="evidence" value="ECO:0000250"/>
    <property type="project" value="UniProtKB"/>
</dbReference>
<dbReference type="GO" id="GO:0006414">
    <property type="term" value="P:translational elongation"/>
    <property type="evidence" value="ECO:0000250"/>
    <property type="project" value="UniProtKB"/>
</dbReference>
<dbReference type="CDD" id="cd01681">
    <property type="entry name" value="aeEF2_snRNP_like_IV"/>
    <property type="match status" value="1"/>
</dbReference>
<dbReference type="CDD" id="cd04096">
    <property type="entry name" value="eEF2_snRNP_like_C"/>
    <property type="match status" value="1"/>
</dbReference>
<dbReference type="CDD" id="cd01885">
    <property type="entry name" value="EF2"/>
    <property type="match status" value="1"/>
</dbReference>
<dbReference type="CDD" id="cd16261">
    <property type="entry name" value="EF2_snRNP_III"/>
    <property type="match status" value="1"/>
</dbReference>
<dbReference type="CDD" id="cd03700">
    <property type="entry name" value="EF2_snRNP_like_II"/>
    <property type="match status" value="1"/>
</dbReference>
<dbReference type="FunFam" id="2.40.30.10:FF:000010">
    <property type="entry name" value="Translation elongation factor 2"/>
    <property type="match status" value="1"/>
</dbReference>
<dbReference type="FunFam" id="3.30.230.10:FF:000006">
    <property type="entry name" value="Translation elongation factor 2"/>
    <property type="match status" value="1"/>
</dbReference>
<dbReference type="FunFam" id="3.30.70.240:FF:000003">
    <property type="entry name" value="Translation elongation factor 2"/>
    <property type="match status" value="1"/>
</dbReference>
<dbReference type="FunFam" id="3.30.70.870:FF:000002">
    <property type="entry name" value="Translation elongation factor 2"/>
    <property type="match status" value="1"/>
</dbReference>
<dbReference type="FunFam" id="3.40.50.300:FF:000058">
    <property type="entry name" value="Translation elongation factor 2"/>
    <property type="match status" value="1"/>
</dbReference>
<dbReference type="Gene3D" id="3.30.230.10">
    <property type="match status" value="1"/>
</dbReference>
<dbReference type="Gene3D" id="3.30.70.240">
    <property type="match status" value="1"/>
</dbReference>
<dbReference type="Gene3D" id="3.30.70.870">
    <property type="entry name" value="Elongation Factor G (Translational Gtpase), domain 3"/>
    <property type="match status" value="1"/>
</dbReference>
<dbReference type="Gene3D" id="3.40.50.300">
    <property type="entry name" value="P-loop containing nucleotide triphosphate hydrolases"/>
    <property type="match status" value="1"/>
</dbReference>
<dbReference type="Gene3D" id="2.40.30.10">
    <property type="entry name" value="Translation factors"/>
    <property type="match status" value="1"/>
</dbReference>
<dbReference type="InterPro" id="IPR041095">
    <property type="entry name" value="EFG_II"/>
</dbReference>
<dbReference type="InterPro" id="IPR035647">
    <property type="entry name" value="EFG_III/V"/>
</dbReference>
<dbReference type="InterPro" id="IPR000640">
    <property type="entry name" value="EFG_V-like"/>
</dbReference>
<dbReference type="InterPro" id="IPR004161">
    <property type="entry name" value="EFTu-like_2"/>
</dbReference>
<dbReference type="InterPro" id="IPR031157">
    <property type="entry name" value="G_TR_CS"/>
</dbReference>
<dbReference type="InterPro" id="IPR027417">
    <property type="entry name" value="P-loop_NTPase"/>
</dbReference>
<dbReference type="InterPro" id="IPR020568">
    <property type="entry name" value="Ribosomal_Su5_D2-typ_SF"/>
</dbReference>
<dbReference type="InterPro" id="IPR014721">
    <property type="entry name" value="Ribsml_uS5_D2-typ_fold_subgr"/>
</dbReference>
<dbReference type="InterPro" id="IPR005225">
    <property type="entry name" value="Small_GTP-bd"/>
</dbReference>
<dbReference type="InterPro" id="IPR000795">
    <property type="entry name" value="T_Tr_GTP-bd_dom"/>
</dbReference>
<dbReference type="InterPro" id="IPR009000">
    <property type="entry name" value="Transl_B-barrel_sf"/>
</dbReference>
<dbReference type="InterPro" id="IPR005517">
    <property type="entry name" value="Transl_elong_EFG/EF2_IV"/>
</dbReference>
<dbReference type="NCBIfam" id="TIGR00231">
    <property type="entry name" value="small_GTP"/>
    <property type="match status" value="1"/>
</dbReference>
<dbReference type="PANTHER" id="PTHR42908:SF35">
    <property type="entry name" value="ELONGATION FACTOR 2"/>
    <property type="match status" value="1"/>
</dbReference>
<dbReference type="PANTHER" id="PTHR42908">
    <property type="entry name" value="TRANSLATION ELONGATION FACTOR-RELATED"/>
    <property type="match status" value="1"/>
</dbReference>
<dbReference type="Pfam" id="PF00679">
    <property type="entry name" value="EFG_C"/>
    <property type="match status" value="1"/>
</dbReference>
<dbReference type="Pfam" id="PF14492">
    <property type="entry name" value="EFG_III"/>
    <property type="match status" value="1"/>
</dbReference>
<dbReference type="Pfam" id="PF03764">
    <property type="entry name" value="EFG_IV"/>
    <property type="match status" value="1"/>
</dbReference>
<dbReference type="Pfam" id="PF00009">
    <property type="entry name" value="GTP_EFTU"/>
    <property type="match status" value="1"/>
</dbReference>
<dbReference type="Pfam" id="PF03144">
    <property type="entry name" value="GTP_EFTU_D2"/>
    <property type="match status" value="1"/>
</dbReference>
<dbReference type="PRINTS" id="PR00315">
    <property type="entry name" value="ELONGATNFCT"/>
</dbReference>
<dbReference type="SMART" id="SM00838">
    <property type="entry name" value="EFG_C"/>
    <property type="match status" value="1"/>
</dbReference>
<dbReference type="SMART" id="SM00889">
    <property type="entry name" value="EFG_IV"/>
    <property type="match status" value="1"/>
</dbReference>
<dbReference type="SUPFAM" id="SSF54980">
    <property type="entry name" value="EF-G C-terminal domain-like"/>
    <property type="match status" value="2"/>
</dbReference>
<dbReference type="SUPFAM" id="SSF52540">
    <property type="entry name" value="P-loop containing nucleoside triphosphate hydrolases"/>
    <property type="match status" value="1"/>
</dbReference>
<dbReference type="SUPFAM" id="SSF54211">
    <property type="entry name" value="Ribosomal protein S5 domain 2-like"/>
    <property type="match status" value="1"/>
</dbReference>
<dbReference type="SUPFAM" id="SSF50447">
    <property type="entry name" value="Translation proteins"/>
    <property type="match status" value="1"/>
</dbReference>
<dbReference type="PROSITE" id="PS00301">
    <property type="entry name" value="G_TR_1"/>
    <property type="match status" value="1"/>
</dbReference>
<dbReference type="PROSITE" id="PS51722">
    <property type="entry name" value="G_TR_2"/>
    <property type="match status" value="1"/>
</dbReference>
<gene>
    <name type="primary">EEF2</name>
    <name type="synonym">EF2</name>
</gene>
<keyword id="KW-0007">Acetylation</keyword>
<keyword id="KW-0013">ADP-ribosylation</keyword>
<keyword id="KW-0963">Cytoplasm</keyword>
<keyword id="KW-0251">Elongation factor</keyword>
<keyword id="KW-0342">GTP-binding</keyword>
<keyword id="KW-0378">Hydrolase</keyword>
<keyword id="KW-1017">Isopeptide bond</keyword>
<keyword id="KW-0488">Methylation</keyword>
<keyword id="KW-0547">Nucleotide-binding</keyword>
<keyword id="KW-0539">Nucleus</keyword>
<keyword id="KW-0597">Phosphoprotein</keyword>
<keyword id="KW-0648">Protein biosynthesis</keyword>
<keyword id="KW-0832">Ubl conjugation</keyword>
<name>EF2_CRIGR</name>
<evidence type="ECO:0000250" key="1">
    <source>
        <dbReference type="UniProtKB" id="P05197"/>
    </source>
</evidence>
<evidence type="ECO:0000250" key="2">
    <source>
        <dbReference type="UniProtKB" id="P13639"/>
    </source>
</evidence>
<evidence type="ECO:0000250" key="3">
    <source>
        <dbReference type="UniProtKB" id="P32324"/>
    </source>
</evidence>
<evidence type="ECO:0000250" key="4">
    <source>
        <dbReference type="UniProtKB" id="P58252"/>
    </source>
</evidence>
<evidence type="ECO:0000250" key="5">
    <source>
        <dbReference type="UniProtKB" id="Q7ZXP8"/>
    </source>
</evidence>
<evidence type="ECO:0000255" key="6">
    <source>
        <dbReference type="PROSITE-ProRule" id="PRU01059"/>
    </source>
</evidence>
<evidence type="ECO:0000269" key="7">
    <source>
    </source>
</evidence>
<evidence type="ECO:0000305" key="8"/>